<organism>
    <name type="scientific">Homo sapiens</name>
    <name type="common">Human</name>
    <dbReference type="NCBI Taxonomy" id="9606"/>
    <lineage>
        <taxon>Eukaryota</taxon>
        <taxon>Metazoa</taxon>
        <taxon>Chordata</taxon>
        <taxon>Craniata</taxon>
        <taxon>Vertebrata</taxon>
        <taxon>Euteleostomi</taxon>
        <taxon>Mammalia</taxon>
        <taxon>Eutheria</taxon>
        <taxon>Euarchontoglires</taxon>
        <taxon>Primates</taxon>
        <taxon>Haplorrhini</taxon>
        <taxon>Catarrhini</taxon>
        <taxon>Hominidae</taxon>
        <taxon>Homo</taxon>
    </lineage>
</organism>
<reference key="1">
    <citation type="journal article" date="1988" name="Oncogene">
        <title>bcr genes and transcripts.</title>
        <authorList>
            <person name="Lifshitz B."/>
            <person name="Fainstein E."/>
            <person name="Marcelle C."/>
            <person name="Shtivelman E."/>
            <person name="Amson R."/>
            <person name="Gale R.P."/>
            <person name="Canaani E."/>
        </authorList>
    </citation>
    <scope>NUCLEOTIDE SEQUENCE [MRNA] (ISOFORM 2)</scope>
    <scope>VARIANT SER-796</scope>
</reference>
<reference key="2">
    <citation type="journal article" date="1995" name="Genomics">
        <title>Sequence and analysis of the human ABL gene, the BCR gene, and regions involved in the Philadelphia chromosomal translocation.</title>
        <authorList>
            <person name="Chissoe S.L."/>
            <person name="Bodenteich A."/>
            <person name="Wang Y.-F."/>
            <person name="Wang Y.-P."/>
            <person name="Burian D."/>
            <person name="Clifton S.W."/>
            <person name="Crabtree J."/>
            <person name="Freeman A."/>
            <person name="Iyer K."/>
            <person name="Jian L."/>
            <person name="Ma Y."/>
            <person name="McLaury H.-J."/>
            <person name="Pan H.-Q."/>
            <person name="Sarhan O.H."/>
            <person name="Toth S."/>
            <person name="Wang Z."/>
            <person name="Zhang G."/>
            <person name="Heisterkamp N."/>
            <person name="Groffen J."/>
            <person name="Roe B.A."/>
        </authorList>
    </citation>
    <scope>NUCLEOTIDE SEQUENCE [GENOMIC DNA]</scope>
    <scope>CHROMOSOMAL TRANSLOCATION</scope>
</reference>
<reference key="3">
    <citation type="submission" date="2005-03" db="EMBL/GenBank/DDBJ databases">
        <title>Preparation of a set of expression-ready clones of mammalian long cDNAs encoding large proteins by the ORF trap cloning method.</title>
        <authorList>
            <person name="Nakajima D."/>
            <person name="Saito K."/>
            <person name="Yamakawa H."/>
            <person name="Kikuno R.F."/>
            <person name="Nakayama M."/>
            <person name="Ohara R."/>
            <person name="Okazaki N."/>
            <person name="Koga H."/>
            <person name="Nagase T."/>
            <person name="Ohara O."/>
        </authorList>
    </citation>
    <scope>NUCLEOTIDE SEQUENCE [LARGE SCALE MRNA] (ISOFORM 1)</scope>
    <scope>VARIANT SER-796</scope>
    <source>
        <tissue>Brain</tissue>
    </source>
</reference>
<reference key="4">
    <citation type="journal article" date="1987" name="EMBO J.">
        <title>cDNA sequence for human bcr, the gene that translocates to the abl oncogene in chronic myeloid leukaemia.</title>
        <authorList>
            <person name="Hariharan I.K."/>
            <person name="Adams J.M."/>
        </authorList>
    </citation>
    <scope>NUCLEOTIDE SEQUENCE [MRNA] OF 1-872</scope>
    <scope>CHROMOSOMAL TRANSLOCATION</scope>
    <scope>INVOLVEMENT IN CML</scope>
    <scope>VARIANT SER-796</scope>
</reference>
<reference key="5">
    <citation type="journal article" date="1986" name="Proc. Natl. Acad. Sci. U.S.A.">
        <title>Overlapping cDNA clones define the complete coding region for the P210c-abl gene product associated with chronic myelogenous leukemia cells containing the Philadelphia chromosome.</title>
        <authorList>
            <person name="Mes-Masson A.-M."/>
            <person name="McLaughlin J."/>
            <person name="Daley G.Q."/>
            <person name="Paskind M."/>
            <person name="Witte O.N."/>
        </authorList>
    </citation>
    <scope>NUCLEOTIDE SEQUENCE [GENOMIC DNA] OF 1-693</scope>
    <scope>INVOLVEMENT IN CML</scope>
</reference>
<reference key="6">
    <citation type="journal article" date="1987" name="Proc. Natl. Acad. Sci. U.S.A.">
        <authorList>
            <person name="Mes-Masson A.M."/>
            <person name="McLaughlin J."/>
            <person name="Daley G.Q."/>
            <person name="Paskind M."/>
            <person name="Witte O.N."/>
        </authorList>
    </citation>
    <scope>ERRATUM OF PUBMED:3540951</scope>
    <scope>SEQUENCE REVISION</scope>
</reference>
<reference key="7">
    <citation type="journal article" date="1985" name="Nature">
        <title>Structural organization of the bcr gene and its role in the Ph' translocation.</title>
        <authorList>
            <person name="Heisterkamp N."/>
            <person name="Stam K."/>
            <person name="Groffen J."/>
            <person name="de Klein A."/>
            <person name="Grosveld G."/>
        </authorList>
    </citation>
    <scope>NUCLEOTIDE SEQUENCE [MRNA] OF 683-1271 (ISOFORM 1)</scope>
</reference>
<reference key="8">
    <citation type="journal article" date="1990" name="Nucleic Acids Res.">
        <title>Unique organization of the human BCR gene promoter.</title>
        <authorList>
            <person name="Zhu Q.S."/>
            <person name="Heisterkamp N."/>
            <person name="Groffen J."/>
        </authorList>
    </citation>
    <scope>NUCLEOTIDE SEQUENCE [GENOMIC DNA] OF 1-46 AND 275-426</scope>
</reference>
<reference key="9">
    <citation type="journal article" date="1987" name="Nature">
        <title>A new fused transcript in Philadelphia chromosome positive acute lymphocytic leukaemia.</title>
        <authorList>
            <person name="Fainstein E."/>
            <person name="Marcelle C."/>
            <person name="Rosner A."/>
            <person name="Canaani E."/>
            <person name="Gale R.P."/>
            <person name="Dreazen O."/>
            <person name="Smith S.D."/>
            <person name="Croce C.M."/>
        </authorList>
    </citation>
    <scope>NUCLEOTIDE SEQUENCE [GENOMIC DNA] OF 56-426</scope>
</reference>
<reference key="10">
    <citation type="journal article" date="1989" name="Oncogene">
        <title>Alternative 5' end of the bcr-abl transcript in chronic myelogenous leukemia.</title>
        <authorList>
            <person name="Romero P."/>
            <person name="Beran M."/>
            <person name="Shtalrid M."/>
            <person name="Andersson B."/>
            <person name="Talpaz M."/>
            <person name="Blick M."/>
        </authorList>
    </citation>
    <scope>NUCLEOTIDE SEQUENCE [MRNA] OF 362-438</scope>
    <scope>ALTERNATIVE SPLICING</scope>
</reference>
<reference key="11">
    <citation type="journal article" date="1990" name="Blood">
        <title>Chronic myeloid leukemia may be associated with several bcr-abl transcripts including the acute lymphoid leukemia-type 7 kb transcript.</title>
        <authorList>
            <person name="Selleri L."/>
            <person name="von Lindern M."/>
            <person name="Hermans A."/>
            <person name="Meijer D."/>
            <person name="Torelli G."/>
            <person name="Grosveld G."/>
        </authorList>
    </citation>
    <scope>NUCLEOTIDE SEQUENCE [GENOMIC DNA] OF 670-842</scope>
    <scope>INVOLVEMENT IN CML</scope>
    <scope>VARIANT SER-796</scope>
</reference>
<reference key="12">
    <citation type="journal article" date="1991" name="Mol. Cell. Biol.">
        <title>Characterization of the BCR promoter in Philadelphia chromosome-positive and -negative cell lines.</title>
        <authorList>
            <person name="Shah N.P."/>
            <person name="Witte O.N."/>
            <person name="Denny C.T."/>
        </authorList>
    </citation>
    <scope>NUCLEOTIDE SEQUENCE [GENOMIC DNA] OF 1-4</scope>
</reference>
<reference key="13">
    <citation type="journal article" date="1991" name="Nature">
        <title>Bcr encodes a GTPase-activating protein for p21rac.</title>
        <authorList>
            <person name="Diekmann D."/>
            <person name="Brill S."/>
            <person name="Garrett M.D."/>
            <person name="Totty N."/>
            <person name="Hsuan J."/>
            <person name="Monfries C."/>
            <person name="Hall C."/>
            <person name="Lim L."/>
            <person name="Hall A."/>
        </authorList>
    </citation>
    <scope>FUNCTION</scope>
</reference>
<reference key="14">
    <citation type="journal article" date="1991" name="Cell">
        <title>BCR sequences essential for transformation by the BCR-ABL oncogene bind to the ABL SH2 regulatory domain in a non-phosphotyrosine-dependent manner.</title>
        <authorList>
            <person name="Pendergast A.M."/>
            <person name="Muller A.J."/>
            <person name="Havlik M.H."/>
            <person name="Maru Y."/>
            <person name="Witte O.N."/>
        </authorList>
    </citation>
    <scope>INTERACTION WITH ABL1 SH2-DOMAIN</scope>
</reference>
<reference key="15">
    <citation type="journal article" date="1991" name="Cell">
        <title>The BCR gene encodes a novel serine/threonine kinase activity within a single exon.</title>
        <authorList>
            <person name="Maru Y."/>
            <person name="Witte O.N."/>
        </authorList>
    </citation>
    <scope>FUNCTION AS PROTEIN KINASE</scope>
    <scope>CATALYTIC ACTIVITY</scope>
</reference>
<reference key="16">
    <citation type="journal article" date="1995" name="Proc. Natl. Acad. Sci. U.S.A.">
        <title>Abr and Bcr are multifunctional regulators of the Rho GTP-binding protein family.</title>
        <authorList>
            <person name="Chuang T.H."/>
            <person name="Xu X."/>
            <person name="Kaartinen V."/>
            <person name="Heisterkamp N."/>
            <person name="Groffen J."/>
            <person name="Bokoch G.M."/>
        </authorList>
    </citation>
    <scope>FUNCTION</scope>
    <scope>DOMAIN</scope>
</reference>
<reference key="17">
    <citation type="journal article" date="1997" name="J. Biol. Chem.">
        <title>The Src family kinase Hck interacts with Bcr-Abl by a kinase-independent mechanism and phosphorylates the Grb2-binding site of Bcr.</title>
        <authorList>
            <person name="Warmuth M."/>
            <person name="Bergmann M."/>
            <person name="Priess A."/>
            <person name="Hauslmann K."/>
            <person name="Emmerich B."/>
            <person name="Hallek M."/>
        </authorList>
    </citation>
    <scope>PHOSPHORYLATION AT TYR-177 BY HCK</scope>
    <scope>MUTAGENESIS OF TYR-177</scope>
    <scope>INTERACTION WITH HCK AND GRB2</scope>
</reference>
<reference key="18">
    <citation type="journal article" date="1999" name="Int. J. Cancer">
        <title>Antigens recognized by autologous antibody in patients with renal-cell carcinoma.</title>
        <authorList>
            <person name="Scanlan M.J."/>
            <person name="Gordan J.D."/>
            <person name="Williamson B."/>
            <person name="Stockert E."/>
            <person name="Bander N.H."/>
            <person name="Jongeneel C.V."/>
            <person name="Gure A.O."/>
            <person name="Jaeger D."/>
            <person name="Jaeger E."/>
            <person name="Knuth A."/>
            <person name="Chen Y.-T."/>
            <person name="Old L.J."/>
        </authorList>
    </citation>
    <scope>IDENTIFICATION AS A RENAL CANCER ANTIGEN</scope>
    <source>
        <tissue>Renal cell carcinoma</tissue>
    </source>
</reference>
<reference key="19">
    <citation type="journal article" date="2004" name="Anal. Chem.">
        <title>Robust phosphoproteomic profiling of tyrosine phosphorylation sites from human T cells using immobilized metal affinity chromatography and tandem mass spectrometry.</title>
        <authorList>
            <person name="Brill L.M."/>
            <person name="Salomon A.R."/>
            <person name="Ficarro S.B."/>
            <person name="Mukherji M."/>
            <person name="Stettler-Gill M."/>
            <person name="Peters E.C."/>
        </authorList>
    </citation>
    <scope>PHOSPHORYLATION [LARGE SCALE ANALYSIS] AT SER-1264</scope>
    <scope>IDENTIFICATION BY MASS SPECTROMETRY [LARGE SCALE ANALYSIS]</scope>
    <source>
        <tissue>Leukemic T-cell</tissue>
    </source>
</reference>
<reference key="20">
    <citation type="journal article" date="2004" name="Exp. Cell Res.">
        <title>The c-Fes tyrosine kinase cooperates with the breakpoint cluster region protein (Bcr) to induce neurite extension in a Rac- and Cdc42-dependent manner.</title>
        <authorList>
            <person name="Laurent C.E."/>
            <person name="Smithgall T.E."/>
        </authorList>
    </citation>
    <scope>INTERACTION WITH FES/FPS; ABL1; PIK3R1 AND GRB2</scope>
    <scope>MUTAGENESIS OF TYR-177</scope>
    <scope>PHOSPHORYLATION AT TYR-246</scope>
    <scope>FUNCTION</scope>
</reference>
<reference key="21">
    <citation type="journal article" date="2004" name="J. Cell Sci.">
        <title>Bcr (breakpoint cluster region) protein binds to PDZ-domains of scaffold protein PDZK1 and vesicle coat protein Mint3.</title>
        <authorList>
            <person name="Malmberg E.K."/>
            <person name="Andersson C.X."/>
            <person name="Gentzsch M."/>
            <person name="Chen J.H."/>
            <person name="Mengos A."/>
            <person name="Cui L."/>
            <person name="Hansson G.C."/>
            <person name="Riordan J.R."/>
        </authorList>
    </citation>
    <scope>INTERACTION WITH PDZK1</scope>
    <scope>MUTAGENESIS OF 1269-THR--GLU-1271 AND VAL-1271</scope>
</reference>
<reference key="22">
    <citation type="journal article" date="2006" name="Cell">
        <title>Global, in vivo, and site-specific phosphorylation dynamics in signaling networks.</title>
        <authorList>
            <person name="Olsen J.V."/>
            <person name="Blagoev B."/>
            <person name="Gnad F."/>
            <person name="Macek B."/>
            <person name="Kumar C."/>
            <person name="Mortensen P."/>
            <person name="Mann M."/>
        </authorList>
    </citation>
    <scope>IDENTIFICATION BY MASS SPECTROMETRY [LARGE SCALE ANALYSIS]</scope>
    <source>
        <tissue>Cervix carcinoma</tissue>
    </source>
</reference>
<reference key="23">
    <citation type="journal article" date="2007" name="Mol. Cell. Biol.">
        <title>Abr and Bcr, two homologous Rac GTPase-activating proteins, control multiple cellular functions of murine macrophages.</title>
        <authorList>
            <person name="Cho Y.J."/>
            <person name="Cunnick J.M."/>
            <person name="Yi S.J."/>
            <person name="Kaartinen V."/>
            <person name="Groffen J."/>
            <person name="Heisterkamp N."/>
        </authorList>
    </citation>
    <scope>FUNCTION</scope>
    <scope>MUTAGENESIS OF ARG-1090 AND ASN-1202</scope>
</reference>
<reference key="24">
    <citation type="journal article" date="2008" name="J. Proteome Res.">
        <title>Phosphoproteome of resting human platelets.</title>
        <authorList>
            <person name="Zahedi R.P."/>
            <person name="Lewandrowski U."/>
            <person name="Wiesner J."/>
            <person name="Wortelkamp S."/>
            <person name="Moebius J."/>
            <person name="Schuetz C."/>
            <person name="Walter U."/>
            <person name="Gambaryan S."/>
            <person name="Sickmann A."/>
        </authorList>
    </citation>
    <scope>IDENTIFICATION BY MASS SPECTROMETRY [LARGE SCALE ANALYSIS]</scope>
    <source>
        <tissue>Platelet</tissue>
    </source>
</reference>
<reference key="25">
    <citation type="journal article" date="2008" name="Proc. Natl. Acad. Sci. U.S.A.">
        <title>A quantitative atlas of mitotic phosphorylation.</title>
        <authorList>
            <person name="Dephoure N."/>
            <person name="Zhou C."/>
            <person name="Villen J."/>
            <person name="Beausoleil S.A."/>
            <person name="Bakalarski C.E."/>
            <person name="Elledge S.J."/>
            <person name="Gygi S.P."/>
        </authorList>
    </citation>
    <scope>PHOSPHORYLATION [LARGE SCALE ANALYSIS] AT SER-459</scope>
    <scope>IDENTIFICATION BY MASS SPECTROMETRY [LARGE SCALE ANALYSIS]</scope>
    <source>
        <tissue>Cervix carcinoma</tissue>
    </source>
</reference>
<reference key="26">
    <citation type="journal article" date="2009" name="Sci. Signal.">
        <title>Quantitative phosphoproteomic analysis of T cell receptor signaling reveals system-wide modulation of protein-protein interactions.</title>
        <authorList>
            <person name="Mayya V."/>
            <person name="Lundgren D.H."/>
            <person name="Hwang S.-I."/>
            <person name="Rezaul K."/>
            <person name="Wu L."/>
            <person name="Eng J.K."/>
            <person name="Rodionov V."/>
            <person name="Han D.K."/>
        </authorList>
    </citation>
    <scope>PHOSPHORYLATION [LARGE SCALE ANALYSIS] AT TYR-177; SER-459 AND SER-1264</scope>
    <scope>IDENTIFICATION BY MASS SPECTROMETRY [LARGE SCALE ANALYSIS]</scope>
    <source>
        <tissue>Leukemic T-cell</tissue>
    </source>
</reference>
<reference key="27">
    <citation type="journal article" date="2011" name="BMC Syst. Biol.">
        <title>Initial characterization of the human central proteome.</title>
        <authorList>
            <person name="Burkard T.R."/>
            <person name="Planyavsky M."/>
            <person name="Kaupe I."/>
            <person name="Breitwieser F.P."/>
            <person name="Buerckstuemmer T."/>
            <person name="Bennett K.L."/>
            <person name="Superti-Furga G."/>
            <person name="Colinge J."/>
        </authorList>
    </citation>
    <scope>IDENTIFICATION BY MASS SPECTROMETRY [LARGE SCALE ANALYSIS]</scope>
</reference>
<reference key="28">
    <citation type="journal article" date="2011" name="Sci. Signal.">
        <title>System-wide temporal characterization of the proteome and phosphoproteome of human embryonic stem cell differentiation.</title>
        <authorList>
            <person name="Rigbolt K.T."/>
            <person name="Prokhorova T.A."/>
            <person name="Akimov V."/>
            <person name="Henningsen J."/>
            <person name="Johansen P.T."/>
            <person name="Kratchmarova I."/>
            <person name="Kassem M."/>
            <person name="Mann M."/>
            <person name="Olsen J.V."/>
            <person name="Blagoev B."/>
        </authorList>
    </citation>
    <scope>PHOSPHORYLATION [LARGE SCALE ANALYSIS] AT SER-122; SER-215 AND SER-459</scope>
    <scope>IDENTIFICATION BY MASS SPECTROMETRY [LARGE SCALE ANALYSIS]</scope>
</reference>
<reference key="29">
    <citation type="journal article" date="2012" name="Mol. Cell. Proteomics">
        <title>Comparative large-scale characterisation of plant vs. mammal proteins reveals similar and idiosyncratic N-alpha acetylation features.</title>
        <authorList>
            <person name="Bienvenut W.V."/>
            <person name="Sumpton D."/>
            <person name="Martinez A."/>
            <person name="Lilla S."/>
            <person name="Espagne C."/>
            <person name="Meinnel T."/>
            <person name="Giglione C."/>
        </authorList>
    </citation>
    <scope>ACETYLATION [LARGE SCALE ANALYSIS] AT MET-1</scope>
    <scope>IDENTIFICATION BY MASS SPECTROMETRY [LARGE SCALE ANALYSIS]</scope>
</reference>
<reference key="30">
    <citation type="journal article" date="2013" name="J. Proteome Res.">
        <title>Toward a comprehensive characterization of a human cancer cell phosphoproteome.</title>
        <authorList>
            <person name="Zhou H."/>
            <person name="Di Palma S."/>
            <person name="Preisinger C."/>
            <person name="Peng M."/>
            <person name="Polat A.N."/>
            <person name="Heck A.J."/>
            <person name="Mohammed S."/>
        </authorList>
    </citation>
    <scope>PHOSPHORYLATION [LARGE SCALE ANALYSIS] AT SER-122; SER-139; SER-202; SER-215; SER-222; SER-356; SER-377; SER-459; SER-463; SER-473; SER-488; TYR-554; THR-641; TYR-644; THR-693 AND SER-894</scope>
    <scope>IDENTIFICATION BY MASS SPECTROMETRY [LARGE SCALE ANALYSIS]</scope>
    <source>
        <tissue>Cervix carcinoma</tissue>
        <tissue>Erythroleukemia</tissue>
    </source>
</reference>
<reference key="31">
    <citation type="journal article" date="2014" name="J. Proteomics">
        <title>An enzyme assisted RP-RPLC approach for in-depth analysis of human liver phosphoproteome.</title>
        <authorList>
            <person name="Bian Y."/>
            <person name="Song C."/>
            <person name="Cheng K."/>
            <person name="Dong M."/>
            <person name="Wang F."/>
            <person name="Huang J."/>
            <person name="Sun D."/>
            <person name="Wang L."/>
            <person name="Ye M."/>
            <person name="Zou H."/>
        </authorList>
    </citation>
    <scope>PHOSPHORYLATION [LARGE SCALE ANALYSIS] AT SER-459</scope>
    <scope>IDENTIFICATION BY MASS SPECTROMETRY [LARGE SCALE ANALYSIS]</scope>
    <source>
        <tissue>Liver</tissue>
    </source>
</reference>
<reference key="32">
    <citation type="journal article" date="2002" name="Nat. Struct. Biol.">
        <title>Structure of the Bcr-Abl oncoprotein oligomerization domain.</title>
        <authorList>
            <person name="Zhao X."/>
            <person name="Ghaffari S."/>
            <person name="Lodish H."/>
            <person name="Malashkevich V.N."/>
            <person name="Kim P.S."/>
        </authorList>
    </citation>
    <scope>X-RAY CRYSTALLOGRAPHY (2.2 ANGSTROMS) OF 3-72</scope>
    <scope>HOMOTETRAMERIZATION</scope>
</reference>
<reference key="33">
    <citation type="journal article" date="2010" name="J. Neurosci.">
        <title>Regulation of synaptic Rac1 activity, long-term potentiation maintenance, and learning and memory by BCR and ABR Rac GTPase-activating proteins.</title>
        <authorList>
            <person name="Oh D."/>
            <person name="Han S."/>
            <person name="Seo J."/>
            <person name="Lee J.R."/>
            <person name="Choi J."/>
            <person name="Groffen J."/>
            <person name="Kim K."/>
            <person name="Cho Y.S."/>
            <person name="Choi H.S."/>
            <person name="Shin H."/>
            <person name="Woo J."/>
            <person name="Won H."/>
            <person name="Park S.K."/>
            <person name="Kim S.Y."/>
            <person name="Jo J."/>
            <person name="Whitcomb D.J."/>
            <person name="Cho K."/>
            <person name="Kim H."/>
            <person name="Bae Y.C."/>
            <person name="Heisterkamp N."/>
            <person name="Choi S.Y."/>
            <person name="Kim E."/>
        </authorList>
    </citation>
    <scope>FUNCTION</scope>
    <scope>INTERACTION WITH DLG4</scope>
    <scope>MUTAGENESIS OF VAL-1271</scope>
</reference>
<reference key="34">
    <citation type="journal article" date="2013" name="J. Cell Biol.">
        <title>The GEF Bcr activates RhoA/MAL signaling to promote keratinocyte differentiation via desmoglein-1.</title>
        <authorList>
            <person name="Dubash A.D."/>
            <person name="Koetsier J.L."/>
            <person name="Amargo E.V."/>
            <person name="Najor N.A."/>
            <person name="Harmon R.M."/>
            <person name="Green K.J."/>
        </authorList>
    </citation>
    <scope>FUNCTION</scope>
    <scope>MUTAGENESIS OF 689-ASN-GLU-690</scope>
</reference>
<reference key="35">
    <citation type="journal article" date="2014" name="J. Biol. Chem.">
        <title>src homology 2 domain containing protein 5 (sh2d5) binds the breakpoint cluster region protein, BCR, and regulates levels of Rac1-GTP.</title>
        <authorList>
            <person name="Gray E.J."/>
            <person name="Petsalaki E."/>
            <person name="James D.A."/>
            <person name="Bagshaw R.D."/>
            <person name="Stacey M.M."/>
            <person name="Rocks O."/>
            <person name="Gingras A.C."/>
            <person name="Pawson T."/>
        </authorList>
    </citation>
    <scope>INTERACTION WITH SH2D5</scope>
</reference>
<reference key="36">
    <citation type="journal article" date="2007" name="Nature">
        <title>Patterns of somatic mutation in human cancer genomes.</title>
        <authorList>
            <person name="Greenman C."/>
            <person name="Stephens P."/>
            <person name="Smith R."/>
            <person name="Dalgliesh G.L."/>
            <person name="Hunter C."/>
            <person name="Bignell G."/>
            <person name="Davies H."/>
            <person name="Teague J."/>
            <person name="Butler A."/>
            <person name="Stevens C."/>
            <person name="Edkins S."/>
            <person name="O'Meara S."/>
            <person name="Vastrik I."/>
            <person name="Schmidt E.E."/>
            <person name="Avis T."/>
            <person name="Barthorpe S."/>
            <person name="Bhamra G."/>
            <person name="Buck G."/>
            <person name="Choudhury B."/>
            <person name="Clements J."/>
            <person name="Cole J."/>
            <person name="Dicks E."/>
            <person name="Forbes S."/>
            <person name="Gray K."/>
            <person name="Halliday K."/>
            <person name="Harrison R."/>
            <person name="Hills K."/>
            <person name="Hinton J."/>
            <person name="Jenkinson A."/>
            <person name="Jones D."/>
            <person name="Menzies A."/>
            <person name="Mironenko T."/>
            <person name="Perry J."/>
            <person name="Raine K."/>
            <person name="Richardson D."/>
            <person name="Shepherd R."/>
            <person name="Small A."/>
            <person name="Tofts C."/>
            <person name="Varian J."/>
            <person name="Webb T."/>
            <person name="West S."/>
            <person name="Widaa S."/>
            <person name="Yates A."/>
            <person name="Cahill D.P."/>
            <person name="Louis D.N."/>
            <person name="Goldstraw P."/>
            <person name="Nicholson A.G."/>
            <person name="Brasseur F."/>
            <person name="Looijenga L."/>
            <person name="Weber B.L."/>
            <person name="Chiew Y.-E."/>
            <person name="DeFazio A."/>
            <person name="Greaves M.F."/>
            <person name="Green A.R."/>
            <person name="Campbell P."/>
            <person name="Birney E."/>
            <person name="Easton D.F."/>
            <person name="Chenevix-Trench G."/>
            <person name="Tan M.-H."/>
            <person name="Khoo S.K."/>
            <person name="Teh B.T."/>
            <person name="Yuen S.T."/>
            <person name="Leung S.Y."/>
            <person name="Wooster R."/>
            <person name="Futreal P.A."/>
            <person name="Stratton M.R."/>
        </authorList>
    </citation>
    <scope>VARIANTS [LARGE SCALE ANALYSIS] PRO-400; MET-413; GLU-752; SER-796; CYS-910; ILE-949; LYS-1037; MET-1091; ALA-1096; GLY-1104; ASN-1106; THR-1149; LYS-1161; GLU-1187; MET-1189; GLY-1204 AND ARG-1235</scope>
</reference>
<protein>
    <recommendedName>
        <fullName evidence="28">Breakpoint cluster region protein</fullName>
        <ecNumber evidence="11">2.7.11.1</ecNumber>
    </recommendedName>
    <alternativeName>
        <fullName>Renal carcinoma antigen NY-REN-26</fullName>
    </alternativeName>
</protein>
<feature type="chain" id="PRO_0000080933" description="Breakpoint cluster region protein">
    <location>
        <begin position="1"/>
        <end position="1271"/>
    </location>
</feature>
<feature type="domain" description="DH" evidence="5">
    <location>
        <begin position="498"/>
        <end position="691"/>
    </location>
</feature>
<feature type="domain" description="PH" evidence="6">
    <location>
        <begin position="708"/>
        <end position="866"/>
    </location>
</feature>
<feature type="domain" description="C2" evidence="4">
    <location>
        <begin position="893"/>
        <end position="1020"/>
    </location>
</feature>
<feature type="domain" description="Rho-GAP" evidence="7">
    <location>
        <begin position="1054"/>
        <end position="1248"/>
    </location>
</feature>
<feature type="region of interest" description="Kinase">
    <location>
        <begin position="1"/>
        <end position="426"/>
    </location>
</feature>
<feature type="region of interest" description="Disordered" evidence="8">
    <location>
        <begin position="67"/>
        <end position="173"/>
    </location>
</feature>
<feature type="region of interest" description="Disordered" evidence="8">
    <location>
        <begin position="185"/>
        <end position="247"/>
    </location>
</feature>
<feature type="region of interest" description="Binding to ABL SH2-domain">
    <location>
        <begin position="197"/>
        <end position="385"/>
    </location>
</feature>
<feature type="region of interest" description="Disordered" evidence="8">
    <location>
        <begin position="286"/>
        <end position="392"/>
    </location>
</feature>
<feature type="region of interest" description="Disordered" evidence="8">
    <location>
        <begin position="416"/>
        <end position="476"/>
    </location>
</feature>
<feature type="coiled-coil region" evidence="3">
    <location>
        <begin position="28"/>
        <end position="55"/>
    </location>
</feature>
<feature type="compositionally biased region" description="Low complexity" evidence="8">
    <location>
        <begin position="87"/>
        <end position="105"/>
    </location>
</feature>
<feature type="compositionally biased region" description="Low complexity" evidence="8">
    <location>
        <begin position="123"/>
        <end position="138"/>
    </location>
</feature>
<feature type="compositionally biased region" description="Basic and acidic residues" evidence="8">
    <location>
        <begin position="185"/>
        <end position="198"/>
    </location>
</feature>
<feature type="compositionally biased region" description="Polar residues" evidence="8">
    <location>
        <begin position="199"/>
        <end position="208"/>
    </location>
</feature>
<feature type="compositionally biased region" description="Low complexity" evidence="8">
    <location>
        <begin position="346"/>
        <end position="356"/>
    </location>
</feature>
<feature type="compositionally biased region" description="Low complexity" evidence="8">
    <location>
        <begin position="369"/>
        <end position="382"/>
    </location>
</feature>
<feature type="compositionally biased region" description="Basic and acidic residues" evidence="8">
    <location>
        <begin position="441"/>
        <end position="451"/>
    </location>
</feature>
<feature type="site" description="Breakpoint for translocation to form BCR-ABL oncogene">
    <location>
        <begin position="426"/>
        <end position="427"/>
    </location>
</feature>
<feature type="site" description="Arginine finger; crucial for GTP hydrolysis by stabilizing the transition state" evidence="7">
    <location>
        <position position="1090"/>
    </location>
</feature>
<feature type="modified residue" description="N-acetylmethionine" evidence="35">
    <location>
        <position position="1"/>
    </location>
</feature>
<feature type="modified residue" description="Phosphoserine" evidence="34 36">
    <location>
        <position position="122"/>
    </location>
</feature>
<feature type="modified residue" description="Phosphoserine" evidence="36">
    <location>
        <position position="139"/>
    </location>
</feature>
<feature type="modified residue" description="Phosphotyrosine; by HCK" evidence="25 33">
    <location>
        <position position="177"/>
    </location>
</feature>
<feature type="modified residue" description="Phosphoserine" evidence="36">
    <location>
        <position position="202"/>
    </location>
</feature>
<feature type="modified residue" description="Phosphoserine" evidence="34 36">
    <location>
        <position position="215"/>
    </location>
</feature>
<feature type="modified residue" description="Phosphoserine" evidence="36">
    <location>
        <position position="222"/>
    </location>
</feature>
<feature type="modified residue" description="Phosphoserine" evidence="2">
    <location>
        <position position="236"/>
    </location>
</feature>
<feature type="modified residue" description="Phosphotyrosine; by FES" evidence="9">
    <location>
        <position position="246"/>
    </location>
</feature>
<feature type="modified residue" description="Phosphoserine" evidence="36">
    <location>
        <position position="356"/>
    </location>
</feature>
<feature type="modified residue" description="Phosphoserine" evidence="36">
    <location>
        <position position="377"/>
    </location>
</feature>
<feature type="modified residue" description="Phosphoserine" evidence="2">
    <location>
        <position position="382"/>
    </location>
</feature>
<feature type="modified residue" description="Phosphothreonine" evidence="2">
    <location>
        <position position="385"/>
    </location>
</feature>
<feature type="modified residue" description="Phosphoserine" evidence="32 33 34 36 37">
    <location>
        <position position="459"/>
    </location>
</feature>
<feature type="modified residue" description="Phosphoserine" evidence="36">
    <location>
        <position position="463"/>
    </location>
</feature>
<feature type="modified residue" description="Omega-N-methylarginine" evidence="2">
    <location>
        <position position="471"/>
    </location>
</feature>
<feature type="modified residue" description="Phosphoserine" evidence="36">
    <location>
        <position position="473"/>
    </location>
</feature>
<feature type="modified residue" description="Phosphoserine" evidence="36">
    <location>
        <position position="488"/>
    </location>
</feature>
<feature type="modified residue" description="Phosphotyrosine" evidence="36">
    <location>
        <position position="554"/>
    </location>
</feature>
<feature type="modified residue" description="Phosphothreonine" evidence="36">
    <location>
        <position position="641"/>
    </location>
</feature>
<feature type="modified residue" description="Phosphotyrosine" evidence="36">
    <location>
        <position position="644"/>
    </location>
</feature>
<feature type="modified residue" description="Phosphothreonine" evidence="36">
    <location>
        <position position="693"/>
    </location>
</feature>
<feature type="modified residue" description="Phosphoserine" evidence="36">
    <location>
        <position position="894"/>
    </location>
</feature>
<feature type="modified residue" description="Phosphoserine" evidence="31 33">
    <location>
        <position position="1264"/>
    </location>
</feature>
<feature type="splice variant" id="VSP_024352" description="In isoform 2." evidence="27">
    <location>
        <begin position="961"/>
        <end position="1004"/>
    </location>
</feature>
<feature type="sequence variant" id="VAR_041883" description="In a bladder transitional cell carcinoma sample; somatic mutation." evidence="14">
    <original>S</original>
    <variation>P</variation>
    <location>
        <position position="400"/>
    </location>
</feature>
<feature type="sequence variant" id="VAR_041884" description="In dbSNP:rs56321828." evidence="14">
    <original>I</original>
    <variation>M</variation>
    <location>
        <position position="413"/>
    </location>
</feature>
<feature type="sequence variant" id="VAR_051983" description="In dbSNP:rs4437065.">
    <original>K</original>
    <variation>T</variation>
    <location>
        <position position="558"/>
    </location>
</feature>
<feature type="sequence variant" id="VAR_041885" description="In dbSNP:rs12484731." evidence="14">
    <original>D</original>
    <variation>E</variation>
    <location>
        <position position="752"/>
    </location>
</feature>
<feature type="sequence variant" id="VAR_031552" description="In dbSNP:rs140504." evidence="14 18 20 21 26">
    <original>N</original>
    <variation>S</variation>
    <location>
        <position position="796"/>
    </location>
</feature>
<feature type="sequence variant" id="VAR_041886" description="In dbSNP:rs35537221." evidence="14">
    <original>Y</original>
    <variation>C</variation>
    <location>
        <position position="910"/>
    </location>
</feature>
<feature type="sequence variant" id="VAR_041887" description="In dbSNP:rs2229038." evidence="14">
    <original>V</original>
    <variation>I</variation>
    <location>
        <position position="949"/>
    </location>
</feature>
<feature type="sequence variant" id="VAR_031553" description="In dbSNP:rs776552570." evidence="14">
    <original>E</original>
    <variation>K</variation>
    <location>
        <position position="1037"/>
    </location>
</feature>
<feature type="sequence variant" id="VAR_041888" description="In dbSNP:rs778229520." evidence="14">
    <original>V</original>
    <variation>M</variation>
    <location>
        <position position="1091"/>
    </location>
</feature>
<feature type="sequence variant" id="VAR_041889" description="In dbSNP:rs745459086." evidence="14">
    <original>T</original>
    <variation>A</variation>
    <location>
        <position position="1096"/>
    </location>
</feature>
<feature type="sequence variant" id="VAR_041890" description="In dbSNP:rs11558696." evidence="14">
    <original>A</original>
    <variation>G</variation>
    <location>
        <position position="1104"/>
    </location>
</feature>
<feature type="sequence variant" id="VAR_041891" description="In dbSNP:rs879255379." evidence="14">
    <original>D</original>
    <variation>N</variation>
    <location>
        <position position="1106"/>
    </location>
</feature>
<feature type="sequence variant" id="VAR_031554" description="In dbSNP:rs35812689.">
    <original>T</original>
    <variation>M</variation>
    <location>
        <position position="1127"/>
    </location>
</feature>
<feature type="sequence variant" id="VAR_041892" description="In dbSNP:rs200099830." evidence="14">
    <original>A</original>
    <variation>T</variation>
    <location>
        <position position="1149"/>
    </location>
</feature>
<feature type="sequence variant" id="VAR_041893" description="In dbSNP:rs2074037194." evidence="14">
    <original>E</original>
    <variation>K</variation>
    <location>
        <position position="1161"/>
    </location>
</feature>
<feature type="sequence variant" id="VAR_041894" description="In dbSNP:rs1195127922." evidence="14">
    <original>K</original>
    <variation>E</variation>
    <location>
        <position position="1187"/>
    </location>
</feature>
<feature type="sequence variant" id="VAR_041895" description="In dbSNP:rs55816482." evidence="14">
    <original>V</original>
    <variation>M</variation>
    <location>
        <position position="1189"/>
    </location>
</feature>
<feature type="sequence variant" id="VAR_041896" description="In dbSNP:rs56265970." evidence="14">
    <original>A</original>
    <variation>G</variation>
    <location>
        <position position="1204"/>
    </location>
</feature>
<feature type="sequence variant" id="VAR_041897" description="In dbSNP:rs55719322." evidence="14">
    <original>W</original>
    <variation>R</variation>
    <location>
        <position position="1235"/>
    </location>
</feature>
<feature type="mutagenesis site" description="Abolishes interaction with FES and GRB2." evidence="9 25">
    <original>Y</original>
    <variation>F</variation>
    <location>
        <position position="177"/>
    </location>
</feature>
<feature type="mutagenesis site" description="Loss of RHOA GEF activity." evidence="17">
    <original>NE</original>
    <variation>AA</variation>
    <location>
        <begin position="689"/>
        <end position="690"/>
    </location>
</feature>
<feature type="mutagenesis site" description="Loss of GAP activity. Loss of GAP activity; when associated with A-1202." evidence="12">
    <original>R</original>
    <variation>A</variation>
    <location>
        <position position="1090"/>
    </location>
</feature>
<feature type="mutagenesis site" description="Loss of GAP activity; when associated with A-1090." evidence="12">
    <original>N</original>
    <variation>A</variation>
    <location>
        <position position="1202"/>
    </location>
</feature>
<feature type="mutagenesis site" description="Abolishes interaction with PDZK1." evidence="10">
    <location>
        <begin position="1269"/>
        <end position="1271"/>
    </location>
</feature>
<feature type="mutagenesis site" description="Reduces interaction with PDZK1. Abolishes interaction with DLG4. No effect on synaptic localization." evidence="10 16">
    <original>V</original>
    <variation>A</variation>
    <location>
        <position position="1271"/>
    </location>
</feature>
<feature type="sequence conflict" description="In Ref. 1; CAA68676." evidence="28" ref="1">
    <original>M</original>
    <variation>I</variation>
    <location>
        <position position="287"/>
    </location>
</feature>
<feature type="sequence conflict" description="In Ref. 1; CAA68676." evidence="28" ref="1">
    <original>G</original>
    <variation>D</variation>
    <location>
        <position position="418"/>
    </location>
</feature>
<feature type="sequence conflict" description="In Ref. 1; CAA68676." evidence="28" ref="1">
    <original>E</original>
    <variation>K</variation>
    <location>
        <position position="483"/>
    </location>
</feature>
<feature type="sequence conflict" description="In Ref. 1; CAA68676." evidence="28" ref="1">
    <original>F</original>
    <variation>S</variation>
    <location>
        <position position="560"/>
    </location>
</feature>
<feature type="sequence conflict" description="In Ref. 11." evidence="28" ref="11">
    <original>E</original>
    <variation>D</variation>
    <location>
        <position position="690"/>
    </location>
</feature>
<feature type="sequence conflict" description="In Ref. 4; CAA26441." evidence="28" ref="4">
    <original>D</original>
    <variation>E</variation>
    <location>
        <position position="733"/>
    </location>
</feature>
<feature type="helix" evidence="38">
    <location>
        <begin position="4"/>
        <end position="14"/>
    </location>
</feature>
<feature type="helix" evidence="38">
    <location>
        <begin position="28"/>
        <end position="64"/>
    </location>
</feature>
<feature type="helix" evidence="41">
    <location>
        <begin position="492"/>
        <end position="521"/>
    </location>
</feature>
<feature type="helix" evidence="41">
    <location>
        <begin position="524"/>
        <end position="531"/>
    </location>
</feature>
<feature type="strand" evidence="41">
    <location>
        <begin position="533"/>
        <end position="535"/>
    </location>
</feature>
<feature type="helix" evidence="41">
    <location>
        <begin position="540"/>
        <end position="546"/>
    </location>
</feature>
<feature type="turn" evidence="41">
    <location>
        <begin position="547"/>
        <end position="549"/>
    </location>
</feature>
<feature type="helix" evidence="41">
    <location>
        <begin position="550"/>
        <end position="569"/>
    </location>
</feature>
<feature type="helix" evidence="41">
    <location>
        <begin position="578"/>
        <end position="586"/>
    </location>
</feature>
<feature type="helix" evidence="41">
    <location>
        <begin position="588"/>
        <end position="611"/>
    </location>
</feature>
<feature type="helix" evidence="41">
    <location>
        <begin position="613"/>
        <end position="618"/>
    </location>
</feature>
<feature type="strand" evidence="40">
    <location>
        <begin position="630"/>
        <end position="634"/>
    </location>
</feature>
<feature type="helix" evidence="41">
    <location>
        <begin position="639"/>
        <end position="651"/>
    </location>
</feature>
<feature type="helix" evidence="41">
    <location>
        <begin position="653"/>
        <end position="661"/>
    </location>
</feature>
<feature type="helix" evidence="41">
    <location>
        <begin position="670"/>
        <end position="687"/>
    </location>
</feature>
<feature type="strand" evidence="40">
    <location>
        <begin position="694"/>
        <end position="697"/>
    </location>
</feature>
<feature type="strand" evidence="42">
    <location>
        <begin position="709"/>
        <end position="719"/>
    </location>
</feature>
<feature type="strand" evidence="42">
    <location>
        <begin position="722"/>
        <end position="740"/>
    </location>
</feature>
<feature type="strand" evidence="42">
    <location>
        <begin position="751"/>
        <end position="758"/>
    </location>
</feature>
<feature type="helix" evidence="42">
    <location>
        <begin position="759"/>
        <end position="761"/>
    </location>
</feature>
<feature type="strand" evidence="42">
    <location>
        <begin position="762"/>
        <end position="767"/>
    </location>
</feature>
<feature type="strand" evidence="42">
    <location>
        <begin position="830"/>
        <end position="838"/>
    </location>
</feature>
<feature type="strand" evidence="42">
    <location>
        <begin position="843"/>
        <end position="847"/>
    </location>
</feature>
<feature type="helix" evidence="42">
    <location>
        <begin position="851"/>
        <end position="865"/>
    </location>
</feature>
<feature type="helix" evidence="42">
    <location>
        <begin position="876"/>
        <end position="885"/>
    </location>
</feature>
<feature type="strand" evidence="39">
    <location>
        <begin position="1268"/>
        <end position="1271"/>
    </location>
</feature>
<sequence>MVDPVGFAEAWKAQFPDSEPPRMELRSVGDIEQELERCKASIRRLEQEVNQERFRMIYLQTLLAKEKKSYDRQRWGFRRAAQAPDGASEPRASASRPQPAPADGADPPPAEEPEARPDGEGSPGKARPGTARRPGAAASGERDDRGPPASVAALRSNFERIRKGHGQPGADAEKPFYVNVEFHHERGLVKVNDKEVSDRISSLGSQAMQMERKKSQHGAGSSVGDASRPPYRGRSSESSCGVDGDYEDAELNPRFLKDNLIDANGGSRPPWPPLEYQPYQSIYVGGMMEGEGKGPLLRSQSTSEQEKRLTWPRRSYSPRSFEDCGGGYTPDCSSNENLTSSEEDFSSGQSSRVSPSPTTYRMFRDKSRSPSQNSQQSFDSSSPPTPQCHKRHRHCPVVVSEATIVGVRKTGQIWPNDGEGAFHGDADGSFGTPPGYGCAADRAEEQRRHQDGLPYIDDSPSSSPHLSSKGRGSRDALVSGALESTKASELDLEKGLEMRKWVLSGILASEETYLSHLEALLLPMKPLKAAATTSQPVLTSQQIETIFFKVPELYEIHKEFYDGLFPRVQQWSHQQRVGDLFQKLASQLGVYRAFVDNYGVAMEMAEKCCQANAQFAEISENLRARSNKDAKDPTTKNSLETLLYKPVDRVTRSTLVLHDLLKHTPASHPDHPLLQDALRISQNFLSSINEEITPRRQSMTVKKGEHRQLLKDSFMVELVEGARKLRHVFLFTDLLLCTKLKKQSGGKTQQYDCKWYIPLTDLSFQMVDELEAVPNIPLVPDEELDALKIKISQIKNDIQREKRANKGSKATERLKKKLSEQESLLLLMSPSMAFRVHSRNGKSYTFLISSDYERAEWRENIREQQKKCFRSFSLTSVELQMLTNSCVKLQTVHSIPLTINKEDDESPGLYGFLNVIVHSATGFKQSSNLYCTLEVDSFGYFVNKAKTRVYRDTAEPNWNEEFEIELEGSQTLRILCYEKCYNKTKIPKEDGESTDRLMGKGQVQLDPQALQDRDWQRTVIAMNGIEVKLSVKFNSREFSLKRMPSRKQTGVFGVKIAVVTKRERSKVPYIVRQCVEEIERRGMEEVGIYRVSGVATDIQALKAAFDVNNKDVSVMMSEMDVNAIAGTLKLYFRELPEPLFTDEFYPNFAEGIALSDPVAKESCMLNLLLSLPEANLLTFLFLLDHLKRVAEKEAVNKMSLHNLATVFGPTLLRPSEKESKLPANPSQPITMTDSWSLEVMSQVQVLLYFLQLEAIPAPDSKRQSILFSTEV</sequence>
<name>BCR_HUMAN</name>
<proteinExistence type="evidence at protein level"/>
<dbReference type="EC" id="2.7.11.1" evidence="11"/>
<dbReference type="EMBL" id="Y00661">
    <property type="protein sequence ID" value="CAA68676.1"/>
    <property type="molecule type" value="mRNA"/>
</dbReference>
<dbReference type="EMBL" id="U07000">
    <property type="protein sequence ID" value="AAB60388.1"/>
    <property type="molecule type" value="Genomic_DNA"/>
</dbReference>
<dbReference type="EMBL" id="AB209991">
    <property type="protein sequence ID" value="BAE06073.1"/>
    <property type="status" value="ALT_INIT"/>
    <property type="molecule type" value="mRNA"/>
</dbReference>
<dbReference type="EMBL" id="X02596">
    <property type="protein sequence ID" value="CAA26441.1"/>
    <property type="molecule type" value="mRNA"/>
</dbReference>
<dbReference type="EMBL" id="M15025">
    <property type="protein sequence ID" value="AAA35594.1"/>
    <property type="molecule type" value="Genomic_DNA"/>
</dbReference>
<dbReference type="EMBL" id="X52828">
    <property type="protein sequence ID" value="CAA37010.1"/>
    <property type="molecule type" value="Genomic_DNA"/>
</dbReference>
<dbReference type="EMBL" id="X52829">
    <property type="protein sequence ID" value="CAA37011.1"/>
    <property type="molecule type" value="Genomic_DNA"/>
</dbReference>
<dbReference type="EMBL" id="X14676">
    <property type="protein sequence ID" value="CAA32806.1"/>
    <property type="molecule type" value="mRNA"/>
</dbReference>
<dbReference type="EMBL" id="M64437">
    <property type="status" value="NOT_ANNOTATED_CDS"/>
    <property type="molecule type" value="mRNA"/>
</dbReference>
<dbReference type="CCDS" id="CCDS13806.1">
    <molecule id="P11274-1"/>
</dbReference>
<dbReference type="CCDS" id="CCDS13807.1">
    <molecule id="P11274-2"/>
</dbReference>
<dbReference type="PIR" id="A26664">
    <property type="entry name" value="TVHUA2"/>
</dbReference>
<dbReference type="PIR" id="A91064">
    <property type="entry name" value="TVHUBR"/>
</dbReference>
<dbReference type="RefSeq" id="NP_004318.3">
    <molecule id="P11274-1"/>
    <property type="nucleotide sequence ID" value="NM_004327.3"/>
</dbReference>
<dbReference type="RefSeq" id="NP_067585.2">
    <molecule id="P11274-2"/>
    <property type="nucleotide sequence ID" value="NM_021574.3"/>
</dbReference>
<dbReference type="PDB" id="1K1F">
    <property type="method" value="X-ray"/>
    <property type="resolution" value="2.20 A"/>
    <property type="chains" value="A/B/C/D/E/F/G/H=1-72"/>
</dbReference>
<dbReference type="PDB" id="2AIN">
    <property type="method" value="NMR"/>
    <property type="chains" value="B=1266-1271"/>
</dbReference>
<dbReference type="PDB" id="5N6R">
    <property type="method" value="NMR"/>
    <property type="chains" value="A=487-702"/>
</dbReference>
<dbReference type="PDB" id="5N7E">
    <property type="method" value="X-ray"/>
    <property type="resolution" value="1.65 A"/>
    <property type="chains" value="B=487-702"/>
</dbReference>
<dbReference type="PDB" id="5OC7">
    <property type="method" value="X-ray"/>
    <property type="resolution" value="1.65 A"/>
    <property type="chains" value="A/D=704-893"/>
</dbReference>
<dbReference type="PDBsum" id="1K1F"/>
<dbReference type="PDBsum" id="2AIN"/>
<dbReference type="PDBsum" id="5N6R"/>
<dbReference type="PDBsum" id="5N7E"/>
<dbReference type="PDBsum" id="5OC7"/>
<dbReference type="SASBDB" id="P11274"/>
<dbReference type="SMR" id="P11274"/>
<dbReference type="BioGRID" id="107083">
    <property type="interactions" value="227"/>
</dbReference>
<dbReference type="CORUM" id="P11274"/>
<dbReference type="ELM" id="P11274"/>
<dbReference type="FunCoup" id="P11274">
    <property type="interactions" value="1481"/>
</dbReference>
<dbReference type="IntAct" id="P11274">
    <property type="interactions" value="169"/>
</dbReference>
<dbReference type="MINT" id="P11274"/>
<dbReference type="STRING" id="9606.ENSP00000303507"/>
<dbReference type="BindingDB" id="P11274"/>
<dbReference type="ChEMBL" id="CHEMBL5146"/>
<dbReference type="DrugBank" id="DB01254">
    <property type="generic name" value="Dasatinib"/>
</dbReference>
<dbReference type="DrugBank" id="DB00619">
    <property type="generic name" value="Imatinib"/>
</dbReference>
<dbReference type="DrugBank" id="DB08901">
    <property type="generic name" value="Ponatinib"/>
</dbReference>
<dbReference type="DrugCentral" id="P11274"/>
<dbReference type="GlyCosmos" id="P11274">
    <property type="glycosylation" value="1 site, 1 glycan"/>
</dbReference>
<dbReference type="GlyGen" id="P11274">
    <property type="glycosylation" value="1 site, 1 O-linked glycan (1 site)"/>
</dbReference>
<dbReference type="iPTMnet" id="P11274"/>
<dbReference type="MetOSite" id="P11274"/>
<dbReference type="PhosphoSitePlus" id="P11274"/>
<dbReference type="BioMuta" id="BCR"/>
<dbReference type="DMDM" id="143811366"/>
<dbReference type="jPOST" id="P11274"/>
<dbReference type="MassIVE" id="P11274"/>
<dbReference type="PaxDb" id="9606-ENSP00000303507"/>
<dbReference type="PeptideAtlas" id="P11274"/>
<dbReference type="ProteomicsDB" id="52729">
    <molecule id="P11274-1"/>
</dbReference>
<dbReference type="ProteomicsDB" id="52730">
    <molecule id="P11274-2"/>
</dbReference>
<dbReference type="Pumba" id="P11274"/>
<dbReference type="ABCD" id="P11274">
    <property type="antibodies" value="2 sequenced antibodies"/>
</dbReference>
<dbReference type="Antibodypedia" id="9277">
    <property type="antibodies" value="674 antibodies from 40 providers"/>
</dbReference>
<dbReference type="DNASU" id="613"/>
<dbReference type="Ensembl" id="ENST00000305877.13">
    <molecule id="P11274-1"/>
    <property type="protein sequence ID" value="ENSP00000303507.8"/>
    <property type="gene ID" value="ENSG00000186716.21"/>
</dbReference>
<dbReference type="Ensembl" id="ENST00000359540.7">
    <molecule id="P11274-2"/>
    <property type="protein sequence ID" value="ENSP00000352535.3"/>
    <property type="gene ID" value="ENSG00000186716.21"/>
</dbReference>
<dbReference type="GeneID" id="613"/>
<dbReference type="KEGG" id="hsa:613"/>
<dbReference type="MANE-Select" id="ENST00000305877.13">
    <property type="protein sequence ID" value="ENSP00000303507.8"/>
    <property type="RefSeq nucleotide sequence ID" value="NM_004327.4"/>
    <property type="RefSeq protein sequence ID" value="NP_004318.3"/>
</dbReference>
<dbReference type="UCSC" id="uc002zww.4">
    <molecule id="P11274-1"/>
    <property type="organism name" value="human"/>
</dbReference>
<dbReference type="AGR" id="HGNC:1014"/>
<dbReference type="CTD" id="613"/>
<dbReference type="DisGeNET" id="613"/>
<dbReference type="GeneCards" id="BCR"/>
<dbReference type="HGNC" id="HGNC:1014">
    <property type="gene designation" value="BCR"/>
</dbReference>
<dbReference type="HPA" id="ENSG00000186716">
    <property type="expression patterns" value="Low tissue specificity"/>
</dbReference>
<dbReference type="MalaCards" id="BCR"/>
<dbReference type="MIM" id="151410">
    <property type="type" value="gene"/>
</dbReference>
<dbReference type="MIM" id="608232">
    <property type="type" value="phenotype"/>
</dbReference>
<dbReference type="neXtProt" id="NX_P11274"/>
<dbReference type="OpenTargets" id="ENSG00000186716"/>
<dbReference type="Orphanet" id="585909">
    <property type="disease" value="B-lymphoblastic leukemia/lymphoma with t(9;22)(q34.1;q11.2)"/>
</dbReference>
<dbReference type="Orphanet" id="521">
    <property type="disease" value="Chronic myeloid leukemia"/>
</dbReference>
<dbReference type="Orphanet" id="261330">
    <property type="disease" value="Distal 22q11.2 microdeletion syndrome"/>
</dbReference>
<dbReference type="Orphanet" id="99861">
    <property type="disease" value="Precursor T-cell acute lymphoblastic leukemia"/>
</dbReference>
<dbReference type="PharmGKB" id="PA25321"/>
<dbReference type="VEuPathDB" id="HostDB:ENSG00000186716"/>
<dbReference type="eggNOG" id="KOG4269">
    <property type="taxonomic scope" value="Eukaryota"/>
</dbReference>
<dbReference type="GeneTree" id="ENSGT00940000153491"/>
<dbReference type="HOGENOM" id="CLU_004164_0_0_1"/>
<dbReference type="InParanoid" id="P11274"/>
<dbReference type="OMA" id="HDLMPFI"/>
<dbReference type="OrthoDB" id="2155291at2759"/>
<dbReference type="PAN-GO" id="P11274">
    <property type="GO annotations" value="1 GO annotation based on evolutionary models"/>
</dbReference>
<dbReference type="PhylomeDB" id="P11274"/>
<dbReference type="TreeFam" id="TF105082"/>
<dbReference type="PathwayCommons" id="P11274"/>
<dbReference type="Reactome" id="R-HSA-1839117">
    <property type="pathway name" value="Signaling by cytosolic FGFR1 fusion mutants"/>
</dbReference>
<dbReference type="Reactome" id="R-HSA-5655302">
    <property type="pathway name" value="Signaling by FGFR1 in disease"/>
</dbReference>
<dbReference type="Reactome" id="R-HSA-8980692">
    <property type="pathway name" value="RHOA GTPase cycle"/>
</dbReference>
<dbReference type="Reactome" id="R-HSA-9013026">
    <property type="pathway name" value="RHOB GTPase cycle"/>
</dbReference>
<dbReference type="Reactome" id="R-HSA-9013106">
    <property type="pathway name" value="RHOC GTPase cycle"/>
</dbReference>
<dbReference type="Reactome" id="R-HSA-9013148">
    <property type="pathway name" value="CDC42 GTPase cycle"/>
</dbReference>
<dbReference type="Reactome" id="R-HSA-9013149">
    <property type="pathway name" value="RAC1 GTPase cycle"/>
</dbReference>
<dbReference type="Reactome" id="R-HSA-9013404">
    <property type="pathway name" value="RAC2 GTPase cycle"/>
</dbReference>
<dbReference type="Reactome" id="R-HSA-9013423">
    <property type="pathway name" value="RAC3 GTPase cycle"/>
</dbReference>
<dbReference type="SignaLink" id="P11274"/>
<dbReference type="SIGNOR" id="P11274"/>
<dbReference type="BioGRID-ORCS" id="613">
    <property type="hits" value="37 hits in 1202 CRISPR screens"/>
</dbReference>
<dbReference type="CD-CODE" id="FB4E32DD">
    <property type="entry name" value="Presynaptic clusters and postsynaptic densities"/>
</dbReference>
<dbReference type="ChiTaRS" id="BCR">
    <property type="organism name" value="human"/>
</dbReference>
<dbReference type="EvolutionaryTrace" id="P11274"/>
<dbReference type="GeneWiki" id="BCR_(gene)"/>
<dbReference type="GenomeRNAi" id="613"/>
<dbReference type="Pharos" id="P11274">
    <property type="development level" value="Tclin"/>
</dbReference>
<dbReference type="PRO" id="PR:P11274"/>
<dbReference type="Proteomes" id="UP000005640">
    <property type="component" value="Chromosome 22"/>
</dbReference>
<dbReference type="RNAct" id="P11274">
    <property type="molecule type" value="protein"/>
</dbReference>
<dbReference type="Bgee" id="ENSG00000186716">
    <property type="expression patterns" value="Expressed in nucleus accumbens and 182 other cell types or tissues"/>
</dbReference>
<dbReference type="ExpressionAtlas" id="P11274">
    <property type="expression patterns" value="baseline and differential"/>
</dbReference>
<dbReference type="GO" id="GO:0030424">
    <property type="term" value="C:axon"/>
    <property type="evidence" value="ECO:0007669"/>
    <property type="project" value="UniProtKB-SubCell"/>
</dbReference>
<dbReference type="GO" id="GO:0005829">
    <property type="term" value="C:cytosol"/>
    <property type="evidence" value="ECO:0000304"/>
    <property type="project" value="Reactome"/>
</dbReference>
<dbReference type="GO" id="GO:0043197">
    <property type="term" value="C:dendritic spine"/>
    <property type="evidence" value="ECO:0007669"/>
    <property type="project" value="UniProtKB-SubCell"/>
</dbReference>
<dbReference type="GO" id="GO:0070062">
    <property type="term" value="C:extracellular exosome"/>
    <property type="evidence" value="ECO:0007005"/>
    <property type="project" value="UniProtKB"/>
</dbReference>
<dbReference type="GO" id="GO:0098978">
    <property type="term" value="C:glutamatergic synapse"/>
    <property type="evidence" value="ECO:0000250"/>
    <property type="project" value="UniProtKB"/>
</dbReference>
<dbReference type="GO" id="GO:0016020">
    <property type="term" value="C:membrane"/>
    <property type="evidence" value="ECO:0007005"/>
    <property type="project" value="UniProtKB"/>
</dbReference>
<dbReference type="GO" id="GO:0005886">
    <property type="term" value="C:plasma membrane"/>
    <property type="evidence" value="ECO:0007669"/>
    <property type="project" value="Ensembl"/>
</dbReference>
<dbReference type="GO" id="GO:0014069">
    <property type="term" value="C:postsynaptic density"/>
    <property type="evidence" value="ECO:0007669"/>
    <property type="project" value="UniProtKB-SubCell"/>
</dbReference>
<dbReference type="GO" id="GO:0032991">
    <property type="term" value="C:protein-containing complex"/>
    <property type="evidence" value="ECO:0000314"/>
    <property type="project" value="MGI"/>
</dbReference>
<dbReference type="GO" id="GO:0098685">
    <property type="term" value="C:Schaffer collateral - CA1 synapse"/>
    <property type="evidence" value="ECO:0000250"/>
    <property type="project" value="UniProtKB"/>
</dbReference>
<dbReference type="GO" id="GO:0005524">
    <property type="term" value="F:ATP binding"/>
    <property type="evidence" value="ECO:0007669"/>
    <property type="project" value="UniProtKB-KW"/>
</dbReference>
<dbReference type="GO" id="GO:0005096">
    <property type="term" value="F:GTPase activator activity"/>
    <property type="evidence" value="ECO:0000314"/>
    <property type="project" value="UniProtKB"/>
</dbReference>
<dbReference type="GO" id="GO:0005085">
    <property type="term" value="F:guanyl-nucleotide exchange factor activity"/>
    <property type="evidence" value="ECO:0000314"/>
    <property type="project" value="UniProtKB"/>
</dbReference>
<dbReference type="GO" id="GO:0106310">
    <property type="term" value="F:protein serine kinase activity"/>
    <property type="evidence" value="ECO:0007669"/>
    <property type="project" value="RHEA"/>
</dbReference>
<dbReference type="GO" id="GO:0004674">
    <property type="term" value="F:protein serine/threonine kinase activity"/>
    <property type="evidence" value="ECO:0000304"/>
    <property type="project" value="ProtInc"/>
</dbReference>
<dbReference type="GO" id="GO:0004713">
    <property type="term" value="F:protein tyrosine kinase activity"/>
    <property type="evidence" value="ECO:0000304"/>
    <property type="project" value="Reactome"/>
</dbReference>
<dbReference type="GO" id="GO:0030036">
    <property type="term" value="P:actin cytoskeleton organization"/>
    <property type="evidence" value="ECO:0007669"/>
    <property type="project" value="Ensembl"/>
</dbReference>
<dbReference type="GO" id="GO:0090630">
    <property type="term" value="P:activation of GTPase activity"/>
    <property type="evidence" value="ECO:0000314"/>
    <property type="project" value="UniProtKB"/>
</dbReference>
<dbReference type="GO" id="GO:0007420">
    <property type="term" value="P:brain development"/>
    <property type="evidence" value="ECO:0007669"/>
    <property type="project" value="Ensembl"/>
</dbReference>
<dbReference type="GO" id="GO:0071222">
    <property type="term" value="P:cellular response to lipopolysaccharide"/>
    <property type="evidence" value="ECO:0007669"/>
    <property type="project" value="Ensembl"/>
</dbReference>
<dbReference type="GO" id="GO:0060216">
    <property type="term" value="P:definitive hemopoiesis"/>
    <property type="evidence" value="ECO:0007669"/>
    <property type="project" value="Ensembl"/>
</dbReference>
<dbReference type="GO" id="GO:0048041">
    <property type="term" value="P:focal adhesion assembly"/>
    <property type="evidence" value="ECO:0000315"/>
    <property type="project" value="UniProtKB"/>
</dbReference>
<dbReference type="GO" id="GO:0048872">
    <property type="term" value="P:homeostasis of number of cells"/>
    <property type="evidence" value="ECO:0007669"/>
    <property type="project" value="Ensembl"/>
</dbReference>
<dbReference type="GO" id="GO:0042472">
    <property type="term" value="P:inner ear morphogenesis"/>
    <property type="evidence" value="ECO:0007669"/>
    <property type="project" value="Ensembl"/>
</dbReference>
<dbReference type="GO" id="GO:0065002">
    <property type="term" value="P:intracellular protein transmembrane transport"/>
    <property type="evidence" value="ECO:0007669"/>
    <property type="project" value="Ensembl"/>
</dbReference>
<dbReference type="GO" id="GO:0030216">
    <property type="term" value="P:keratinocyte differentiation"/>
    <property type="evidence" value="ECO:0000315"/>
    <property type="project" value="UniProtKB"/>
</dbReference>
<dbReference type="GO" id="GO:1905517">
    <property type="term" value="P:macrophage migration"/>
    <property type="evidence" value="ECO:0007669"/>
    <property type="project" value="Ensembl"/>
</dbReference>
<dbReference type="GO" id="GO:0050804">
    <property type="term" value="P:modulation of chemical synaptic transmission"/>
    <property type="evidence" value="ECO:0000250"/>
    <property type="project" value="UniProtKB"/>
</dbReference>
<dbReference type="GO" id="GO:0060313">
    <property type="term" value="P:negative regulation of blood vessel remodeling"/>
    <property type="evidence" value="ECO:0007669"/>
    <property type="project" value="Ensembl"/>
</dbReference>
<dbReference type="GO" id="GO:0002692">
    <property type="term" value="P:negative regulation of cellular extravasation"/>
    <property type="evidence" value="ECO:0007669"/>
    <property type="project" value="Ensembl"/>
</dbReference>
<dbReference type="GO" id="GO:0050728">
    <property type="term" value="P:negative regulation of inflammatory response"/>
    <property type="evidence" value="ECO:0007669"/>
    <property type="project" value="Ensembl"/>
</dbReference>
<dbReference type="GO" id="GO:1905522">
    <property type="term" value="P:negative regulation of macrophage migration"/>
    <property type="evidence" value="ECO:0007669"/>
    <property type="project" value="Ensembl"/>
</dbReference>
<dbReference type="GO" id="GO:0043314">
    <property type="term" value="P:negative regulation of neutrophil degranulation"/>
    <property type="evidence" value="ECO:0007669"/>
    <property type="project" value="Ensembl"/>
</dbReference>
<dbReference type="GO" id="GO:2000378">
    <property type="term" value="P:negative regulation of reactive oxygen species metabolic process"/>
    <property type="evidence" value="ECO:0007669"/>
    <property type="project" value="Ensembl"/>
</dbReference>
<dbReference type="GO" id="GO:0060268">
    <property type="term" value="P:negative regulation of respiratory burst"/>
    <property type="evidence" value="ECO:0007669"/>
    <property type="project" value="Ensembl"/>
</dbReference>
<dbReference type="GO" id="GO:0050885">
    <property type="term" value="P:neuromuscular process controlling balance"/>
    <property type="evidence" value="ECO:0007669"/>
    <property type="project" value="Ensembl"/>
</dbReference>
<dbReference type="GO" id="GO:0043312">
    <property type="term" value="P:neutrophil degranulation"/>
    <property type="evidence" value="ECO:0007669"/>
    <property type="project" value="Ensembl"/>
</dbReference>
<dbReference type="GO" id="GO:0006909">
    <property type="term" value="P:phagocytosis"/>
    <property type="evidence" value="ECO:0007669"/>
    <property type="project" value="Ensembl"/>
</dbReference>
<dbReference type="GO" id="GO:0050766">
    <property type="term" value="P:positive regulation of phagocytosis"/>
    <property type="evidence" value="ECO:0007669"/>
    <property type="project" value="Ensembl"/>
</dbReference>
<dbReference type="GO" id="GO:0006468">
    <property type="term" value="P:protein phosphorylation"/>
    <property type="evidence" value="ECO:0000304"/>
    <property type="project" value="ProtInc"/>
</dbReference>
<dbReference type="GO" id="GO:0051726">
    <property type="term" value="P:regulation of cell cycle"/>
    <property type="evidence" value="ECO:0007669"/>
    <property type="project" value="Ensembl"/>
</dbReference>
<dbReference type="GO" id="GO:0035023">
    <property type="term" value="P:regulation of Rho protein signal transduction"/>
    <property type="evidence" value="ECO:0000315"/>
    <property type="project" value="UniProtKB"/>
</dbReference>
<dbReference type="GO" id="GO:0051056">
    <property type="term" value="P:regulation of small GTPase mediated signal transduction"/>
    <property type="evidence" value="ECO:0000304"/>
    <property type="project" value="Reactome"/>
</dbReference>
<dbReference type="GO" id="GO:0043114">
    <property type="term" value="P:regulation of vascular permeability"/>
    <property type="evidence" value="ECO:0007669"/>
    <property type="project" value="Ensembl"/>
</dbReference>
<dbReference type="GO" id="GO:0003014">
    <property type="term" value="P:renal system process"/>
    <property type="evidence" value="ECO:0007669"/>
    <property type="project" value="Ensembl"/>
</dbReference>
<dbReference type="GO" id="GO:0007165">
    <property type="term" value="P:signal transduction"/>
    <property type="evidence" value="ECO:0000304"/>
    <property type="project" value="ProtInc"/>
</dbReference>
<dbReference type="GO" id="GO:0007264">
    <property type="term" value="P:small GTPase-mediated signal transduction"/>
    <property type="evidence" value="ECO:0000315"/>
    <property type="project" value="UniProtKB"/>
</dbReference>
<dbReference type="CDD" id="cd08686">
    <property type="entry name" value="C2_ABR"/>
    <property type="match status" value="1"/>
</dbReference>
<dbReference type="CDD" id="cd13367">
    <property type="entry name" value="PH_BCR_vertebrate"/>
    <property type="match status" value="1"/>
</dbReference>
<dbReference type="CDD" id="cd04387">
    <property type="entry name" value="RhoGAP_Bcr"/>
    <property type="match status" value="1"/>
</dbReference>
<dbReference type="CDD" id="cd00160">
    <property type="entry name" value="RhoGEF"/>
    <property type="match status" value="1"/>
</dbReference>
<dbReference type="DisProt" id="DP03016"/>
<dbReference type="FunFam" id="2.60.40.150:FF:000057">
    <property type="entry name" value="active breakpoint cluster region-related protein isoform X1"/>
    <property type="match status" value="1"/>
</dbReference>
<dbReference type="FunFam" id="1.20.900.10:FF:000014">
    <property type="entry name" value="active breakpoint cluster region-related protein isoform X2"/>
    <property type="match status" value="1"/>
</dbReference>
<dbReference type="FunFam" id="1.10.555.10:FF:000004">
    <property type="entry name" value="active breakpoint cluster region-related protein-like"/>
    <property type="match status" value="1"/>
</dbReference>
<dbReference type="Gene3D" id="4.10.280.30">
    <property type="entry name" value="Bcr-Abl oncoprotein oligomerisation domain"/>
    <property type="match status" value="1"/>
</dbReference>
<dbReference type="Gene3D" id="2.60.40.150">
    <property type="entry name" value="C2 domain"/>
    <property type="match status" value="1"/>
</dbReference>
<dbReference type="Gene3D" id="1.20.900.10">
    <property type="entry name" value="Dbl homology (DH) domain"/>
    <property type="match status" value="1"/>
</dbReference>
<dbReference type="Gene3D" id="2.30.29.30">
    <property type="entry name" value="Pleckstrin-homology domain (PH domain)/Phosphotyrosine-binding domain (PTB)"/>
    <property type="match status" value="1"/>
</dbReference>
<dbReference type="Gene3D" id="1.10.555.10">
    <property type="entry name" value="Rho GTPase activation protein"/>
    <property type="match status" value="1"/>
</dbReference>
<dbReference type="InterPro" id="IPR037769">
    <property type="entry name" value="Abr/Bcr"/>
</dbReference>
<dbReference type="InterPro" id="IPR015123">
    <property type="entry name" value="Bcr-Abl_oncoprot_oligo"/>
</dbReference>
<dbReference type="InterPro" id="IPR036481">
    <property type="entry name" value="Bcr-Abl_oncoprot_oligo_sf"/>
</dbReference>
<dbReference type="InterPro" id="IPR000008">
    <property type="entry name" value="C2_dom"/>
</dbReference>
<dbReference type="InterPro" id="IPR035892">
    <property type="entry name" value="C2_domain_sf"/>
</dbReference>
<dbReference type="InterPro" id="IPR035899">
    <property type="entry name" value="DBL_dom_sf"/>
</dbReference>
<dbReference type="InterPro" id="IPR000219">
    <property type="entry name" value="DH_dom"/>
</dbReference>
<dbReference type="InterPro" id="IPR001331">
    <property type="entry name" value="GDS_CDC24_CS"/>
</dbReference>
<dbReference type="InterPro" id="IPR011993">
    <property type="entry name" value="PH-like_dom_sf"/>
</dbReference>
<dbReference type="InterPro" id="IPR001849">
    <property type="entry name" value="PH_domain"/>
</dbReference>
<dbReference type="InterPro" id="IPR008936">
    <property type="entry name" value="Rho_GTPase_activation_prot"/>
</dbReference>
<dbReference type="InterPro" id="IPR000198">
    <property type="entry name" value="RhoGAP_dom"/>
</dbReference>
<dbReference type="PANTHER" id="PTHR23182:SF3">
    <property type="entry name" value="BREAKPOINT CLUSTER REGION PROTEIN"/>
    <property type="match status" value="1"/>
</dbReference>
<dbReference type="PANTHER" id="PTHR23182">
    <property type="entry name" value="BREAKPOINT CLUSTER REGION PROTEIN BCR"/>
    <property type="match status" value="1"/>
</dbReference>
<dbReference type="Pfam" id="PF09036">
    <property type="entry name" value="Bcr-Abl_Oligo"/>
    <property type="match status" value="1"/>
</dbReference>
<dbReference type="Pfam" id="PF00168">
    <property type="entry name" value="C2"/>
    <property type="match status" value="1"/>
</dbReference>
<dbReference type="Pfam" id="PF19057">
    <property type="entry name" value="PH_19"/>
    <property type="match status" value="1"/>
</dbReference>
<dbReference type="Pfam" id="PF00620">
    <property type="entry name" value="RhoGAP"/>
    <property type="match status" value="1"/>
</dbReference>
<dbReference type="Pfam" id="PF00621">
    <property type="entry name" value="RhoGEF"/>
    <property type="match status" value="1"/>
</dbReference>
<dbReference type="SMART" id="SM00239">
    <property type="entry name" value="C2"/>
    <property type="match status" value="1"/>
</dbReference>
<dbReference type="SMART" id="SM00233">
    <property type="entry name" value="PH"/>
    <property type="match status" value="1"/>
</dbReference>
<dbReference type="SMART" id="SM00324">
    <property type="entry name" value="RhoGAP"/>
    <property type="match status" value="1"/>
</dbReference>
<dbReference type="SMART" id="SM00325">
    <property type="entry name" value="RhoGEF"/>
    <property type="match status" value="1"/>
</dbReference>
<dbReference type="SUPFAM" id="SSF69036">
    <property type="entry name" value="Bcr-Abl oncoprotein oligomerization domain"/>
    <property type="match status" value="1"/>
</dbReference>
<dbReference type="SUPFAM" id="SSF49562">
    <property type="entry name" value="C2 domain (Calcium/lipid-binding domain, CaLB)"/>
    <property type="match status" value="1"/>
</dbReference>
<dbReference type="SUPFAM" id="SSF48065">
    <property type="entry name" value="DBL homology domain (DH-domain)"/>
    <property type="match status" value="1"/>
</dbReference>
<dbReference type="SUPFAM" id="SSF48350">
    <property type="entry name" value="GTPase activation domain, GAP"/>
    <property type="match status" value="1"/>
</dbReference>
<dbReference type="SUPFAM" id="SSF50729">
    <property type="entry name" value="PH domain-like"/>
    <property type="match status" value="1"/>
</dbReference>
<dbReference type="PROSITE" id="PS50004">
    <property type="entry name" value="C2"/>
    <property type="match status" value="1"/>
</dbReference>
<dbReference type="PROSITE" id="PS00741">
    <property type="entry name" value="DH_1"/>
    <property type="match status" value="1"/>
</dbReference>
<dbReference type="PROSITE" id="PS50010">
    <property type="entry name" value="DH_2"/>
    <property type="match status" value="1"/>
</dbReference>
<dbReference type="PROSITE" id="PS50003">
    <property type="entry name" value="PH_DOMAIN"/>
    <property type="match status" value="1"/>
</dbReference>
<dbReference type="PROSITE" id="PS50238">
    <property type="entry name" value="RHOGAP"/>
    <property type="match status" value="1"/>
</dbReference>
<comment type="function">
    <text evidence="2 11 12 15 17 23">Protein with a unique structure having two opposing regulatory activities toward small GTP-binding proteins. The C-terminus is a GTPase-activating protein (GAP) domain which stimulates GTP hydrolysis by RAC1, RAC2 and CDC42. Accelerates the intrinsic rate of GTP hydrolysis of RAC1 or CDC42, leading to down-regulation of the active GTP-bound form (PubMed:17116687, PubMed:1903516, PubMed:7479768). The central Dbl homology (DH) domain functions as guanine nucleotide exchange factor (GEF) that modulates the GTPases CDC42, RHOA and RAC1. Promotes the conversion of CDC42, RHOA and RAC1 from the GDP-bound to the GTP-bound form (PubMed:23940119, PubMed:7479768). The amino terminus contains an intrinsic kinase activity (PubMed:1657398). Functions as an important negative regulator of neuronal RAC1 activity (By similarity). Regulates macrophage functions such as CSF1-directed motility and phagocytosis through the modulation of RAC1 activity (PubMed:17116687). Plays a major role as a RHOA GEF in keratinocytes being involved in focal adhesion formation and keratinocyte differentiation (PubMed:23940119).</text>
</comment>
<comment type="catalytic activity">
    <reaction evidence="11">
        <text>L-seryl-[protein] + ATP = O-phospho-L-seryl-[protein] + ADP + H(+)</text>
        <dbReference type="Rhea" id="RHEA:17989"/>
        <dbReference type="Rhea" id="RHEA-COMP:9863"/>
        <dbReference type="Rhea" id="RHEA-COMP:11604"/>
        <dbReference type="ChEBI" id="CHEBI:15378"/>
        <dbReference type="ChEBI" id="CHEBI:29999"/>
        <dbReference type="ChEBI" id="CHEBI:30616"/>
        <dbReference type="ChEBI" id="CHEBI:83421"/>
        <dbReference type="ChEBI" id="CHEBI:456216"/>
        <dbReference type="EC" id="2.7.11.1"/>
    </reaction>
    <physiologicalReaction direction="left-to-right" evidence="11">
        <dbReference type="Rhea" id="RHEA:17990"/>
    </physiologicalReaction>
</comment>
<comment type="catalytic activity">
    <reaction evidence="11">
        <text>L-threonyl-[protein] + ATP = O-phospho-L-threonyl-[protein] + ADP + H(+)</text>
        <dbReference type="Rhea" id="RHEA:46608"/>
        <dbReference type="Rhea" id="RHEA-COMP:11060"/>
        <dbReference type="Rhea" id="RHEA-COMP:11605"/>
        <dbReference type="ChEBI" id="CHEBI:15378"/>
        <dbReference type="ChEBI" id="CHEBI:30013"/>
        <dbReference type="ChEBI" id="CHEBI:30616"/>
        <dbReference type="ChEBI" id="CHEBI:61977"/>
        <dbReference type="ChEBI" id="CHEBI:456216"/>
        <dbReference type="EC" id="2.7.11.1"/>
    </reaction>
    <physiologicalReaction direction="left-to-right" evidence="11">
        <dbReference type="Rhea" id="RHEA:46609"/>
    </physiologicalReaction>
</comment>
<comment type="subunit">
    <text evidence="2 9 10 13 16 19 25">Homotetramer. Interacts with PDZK1 (PubMed:15494376). May interact with CCPG1 (By similarity). Interacts with FES/FPS, ABL1, PIK3R1 and GRB2 (PubMed:15302586, PubMed:1712671, PubMed:9407116). Interacts with HCK (PubMed:9407116). Interacts with SH2D5 (PubMed:25331951). Interacts with DLG4 (PubMed:20962234).</text>
</comment>
<comment type="interaction">
    <interactant intactId="EBI-712838">
        <id>P11274</id>
    </interactant>
    <interactant intactId="EBI-401755">
        <id>P62993</id>
        <label>GRB2</label>
    </interactant>
    <organismsDiffer>false</organismsDiffer>
    <experiments>11</experiments>
</comment>
<comment type="interaction">
    <interactant intactId="EBI-712838">
        <id>P11274</id>
    </interactant>
    <interactant intactId="EBI-15101685">
        <id>Q6ZV89-1</id>
        <label>SH2D5</label>
    </interactant>
    <organismsDiffer>false</organismsDiffer>
    <experiments>2</experiments>
</comment>
<comment type="interaction">
    <interactant intactId="EBI-712838">
        <id>P11274</id>
    </interactant>
    <interactant intactId="EBI-4398527">
        <id>Q9H2K2</id>
        <label>TNKS2</label>
    </interactant>
    <organismsDiffer>false</organismsDiffer>
    <experiments>3</experiments>
</comment>
<comment type="interaction">
    <interactant intactId="EBI-712838">
        <id>P11274</id>
    </interactant>
    <interactant intactId="EBI-15101945">
        <id>A2AM67</id>
        <label>Sh2d5</label>
    </interactant>
    <organismsDiffer>true</organismsDiffer>
    <experiments>7</experiments>
</comment>
<comment type="interaction">
    <interactant intactId="EBI-712838">
        <id>P11274</id>
    </interactant>
    <interactant intactId="EBI-15101675">
        <id>Q8JZW5</id>
        <label>Sh2d5</label>
    </interactant>
    <organismsDiffer>true</organismsDiffer>
    <experiments>2</experiments>
</comment>
<comment type="interaction">
    <interactant intactId="EBI-8658094">
        <id>P11274-1</id>
    </interactant>
    <interactant intactId="EBI-968788">
        <id>P18031</id>
        <label>PTPN1</label>
    </interactant>
    <organismsDiffer>false</organismsDiffer>
    <experiments>3</experiments>
</comment>
<comment type="subcellular location">
    <subcellularLocation>
        <location evidence="2">Postsynaptic density</location>
    </subcellularLocation>
    <subcellularLocation>
        <location evidence="2">Cell projection</location>
        <location evidence="2">Dendritic spine</location>
    </subcellularLocation>
    <subcellularLocation>
        <location evidence="2">Cell projection</location>
        <location evidence="2">Axon</location>
    </subcellularLocation>
    <subcellularLocation>
        <location evidence="1">Synapse</location>
    </subcellularLocation>
</comment>
<comment type="alternative products">
    <event type="alternative splicing"/>
    <isoform>
        <id>P11274-1</id>
        <name>1</name>
        <sequence type="displayed"/>
    </isoform>
    <isoform>
        <id>P11274-2</id>
        <name>2</name>
        <sequence type="described" ref="VSP_024352"/>
    </isoform>
</comment>
<comment type="domain">
    <text>The region involved in binding to ABL1 SH2-domain is rich in serine residues and needs to be Ser/Thr phosphorylated prior to SH2 binding. This region is essential for the activation of the ABL1 tyrosine kinase and transforming potential of the chimeric BCR-ABL oncogene.</text>
</comment>
<comment type="domain">
    <text evidence="2">The DH domain is involved in interaction with CCPG1.</text>
</comment>
<comment type="domain">
    <text evidence="29">The amino terminus contains an intrinsic kinase activity. The central Dbl homology (DH) domain functions as a guanine nucleotide exchange factor (GEF) that modulates the GTPases CDC42, RHOA and RAC1. Promotes the conversion of CDC42, RHOA and RAC1 from the GDP-bound to the GTP-bound form. The C-terminus is a Rho-GAP domain which stimulates GTP hydrolysis by RAC1, RAC2 and CDC42. The protein has a unique structure having two opposing regulatory activities toward small GTP-binding proteins.</text>
</comment>
<comment type="PTM">
    <text evidence="9 25">Autophosphorylated. Phosphorylated by FES/FPS on tyrosine residues, leading to down-regulation of the BCR kinase activity. Phosphorylation at Tyr-177 by HCK is important for interaction with GRB2.</text>
</comment>
<comment type="disease" evidence="18 20 22">
    <disease id="DI-03735">
        <name>Leukemia, chronic myeloid</name>
        <acronym>CML</acronym>
        <description>A clonal myeloproliferative disorder of a pluripotent stem cell with a specific cytogenetic abnormality, the Philadelphia chromosome (Ph), involving myeloid, erythroid, megakaryocytic, B-lymphoid, and sometimes T-lymphoid cells, but not marrow fibroblasts.</description>
        <dbReference type="MIM" id="608232"/>
    </disease>
    <text>The gene represented in this entry is involved in disease pathogenesis.</text>
</comment>
<comment type="disease">
    <text evidence="20 24">A chromosomal aberration involving BCR has been found in patients with chronic myeloid leukemia. Translocation t(9;22)(q34;q11) with ABL1. The translocation produces a BCR-ABL found also in acute myeloid leukemia (AML) and acute lymphoblastic leukemia (ALL).</text>
</comment>
<comment type="sequence caution" evidence="28">
    <conflict type="erroneous initiation">
        <sequence resource="EMBL-CDS" id="BAE06073"/>
    </conflict>
    <text>Extended N-terminus.</text>
</comment>
<comment type="online information" name="Atlas of Genetics and Cytogenetics in Oncology and Haematology">
    <link uri="https://atlasgeneticsoncology.org/gene/55/BCR"/>
</comment>
<accession>P11274</accession>
<accession>P78501</accession>
<accession>Q12842</accession>
<accession>Q4LE80</accession>
<accession>Q6NZI3</accession>
<gene>
    <name evidence="30" type="primary">BCR</name>
    <name type="synonym">BCR1</name>
    <name type="synonym">D22S11</name>
</gene>
<evidence type="ECO:0000250" key="1">
    <source>
        <dbReference type="UniProtKB" id="F1LXF1"/>
    </source>
</evidence>
<evidence type="ECO:0000250" key="2">
    <source>
        <dbReference type="UniProtKB" id="Q6PAJ1"/>
    </source>
</evidence>
<evidence type="ECO:0000255" key="3"/>
<evidence type="ECO:0000255" key="4">
    <source>
        <dbReference type="PROSITE-ProRule" id="PRU00041"/>
    </source>
</evidence>
<evidence type="ECO:0000255" key="5">
    <source>
        <dbReference type="PROSITE-ProRule" id="PRU00062"/>
    </source>
</evidence>
<evidence type="ECO:0000255" key="6">
    <source>
        <dbReference type="PROSITE-ProRule" id="PRU00145"/>
    </source>
</evidence>
<evidence type="ECO:0000255" key="7">
    <source>
        <dbReference type="PROSITE-ProRule" id="PRU00172"/>
    </source>
</evidence>
<evidence type="ECO:0000256" key="8">
    <source>
        <dbReference type="SAM" id="MobiDB-lite"/>
    </source>
</evidence>
<evidence type="ECO:0000269" key="9">
    <source>
    </source>
</evidence>
<evidence type="ECO:0000269" key="10">
    <source>
    </source>
</evidence>
<evidence type="ECO:0000269" key="11">
    <source>
    </source>
</evidence>
<evidence type="ECO:0000269" key="12">
    <source>
    </source>
</evidence>
<evidence type="ECO:0000269" key="13">
    <source>
    </source>
</evidence>
<evidence type="ECO:0000269" key="14">
    <source>
    </source>
</evidence>
<evidence type="ECO:0000269" key="15">
    <source>
    </source>
</evidence>
<evidence type="ECO:0000269" key="16">
    <source>
    </source>
</evidence>
<evidence type="ECO:0000269" key="17">
    <source>
    </source>
</evidence>
<evidence type="ECO:0000269" key="18">
    <source>
    </source>
</evidence>
<evidence type="ECO:0000269" key="19">
    <source>
    </source>
</evidence>
<evidence type="ECO:0000269" key="20">
    <source>
    </source>
</evidence>
<evidence type="ECO:0000269" key="21">
    <source>
    </source>
</evidence>
<evidence type="ECO:0000269" key="22">
    <source>
    </source>
</evidence>
<evidence type="ECO:0000269" key="23">
    <source>
    </source>
</evidence>
<evidence type="ECO:0000269" key="24">
    <source>
    </source>
</evidence>
<evidence type="ECO:0000269" key="25">
    <source>
    </source>
</evidence>
<evidence type="ECO:0000269" key="26">
    <source ref="3"/>
</evidence>
<evidence type="ECO:0000303" key="27">
    <source>
    </source>
</evidence>
<evidence type="ECO:0000305" key="28"/>
<evidence type="ECO:0000305" key="29">
    <source>
    </source>
</evidence>
<evidence type="ECO:0000312" key="30">
    <source>
        <dbReference type="HGNC" id="HGNC:1014"/>
    </source>
</evidence>
<evidence type="ECO:0007744" key="31">
    <source>
    </source>
</evidence>
<evidence type="ECO:0007744" key="32">
    <source>
    </source>
</evidence>
<evidence type="ECO:0007744" key="33">
    <source>
    </source>
</evidence>
<evidence type="ECO:0007744" key="34">
    <source>
    </source>
</evidence>
<evidence type="ECO:0007744" key="35">
    <source>
    </source>
</evidence>
<evidence type="ECO:0007744" key="36">
    <source>
    </source>
</evidence>
<evidence type="ECO:0007744" key="37">
    <source>
    </source>
</evidence>
<evidence type="ECO:0007829" key="38">
    <source>
        <dbReference type="PDB" id="1K1F"/>
    </source>
</evidence>
<evidence type="ECO:0007829" key="39">
    <source>
        <dbReference type="PDB" id="2AIN"/>
    </source>
</evidence>
<evidence type="ECO:0007829" key="40">
    <source>
        <dbReference type="PDB" id="5N6R"/>
    </source>
</evidence>
<evidence type="ECO:0007829" key="41">
    <source>
        <dbReference type="PDB" id="5N7E"/>
    </source>
</evidence>
<evidence type="ECO:0007829" key="42">
    <source>
        <dbReference type="PDB" id="5OC7"/>
    </source>
</evidence>
<keyword id="KW-0002">3D-structure</keyword>
<keyword id="KW-0007">Acetylation</keyword>
<keyword id="KW-0025">Alternative splicing</keyword>
<keyword id="KW-0067">ATP-binding</keyword>
<keyword id="KW-0966">Cell projection</keyword>
<keyword id="KW-0160">Chromosomal rearrangement</keyword>
<keyword id="KW-0175">Coiled coil</keyword>
<keyword id="KW-0343">GTPase activation</keyword>
<keyword id="KW-0344">Guanine-nucleotide releasing factor</keyword>
<keyword id="KW-0418">Kinase</keyword>
<keyword id="KW-0488">Methylation</keyword>
<keyword id="KW-0547">Nucleotide-binding</keyword>
<keyword id="KW-0597">Phosphoprotein</keyword>
<keyword id="KW-1267">Proteomics identification</keyword>
<keyword id="KW-0656">Proto-oncogene</keyword>
<keyword id="KW-1185">Reference proteome</keyword>
<keyword id="KW-0723">Serine/threonine-protein kinase</keyword>
<keyword id="KW-0770">Synapse</keyword>
<keyword id="KW-0808">Transferase</keyword>